<protein>
    <recommendedName>
        <fullName evidence="1">Protein/nucleic acid deglycase HchA</fullName>
        <ecNumber evidence="1">3.1.2.-</ecNumber>
        <ecNumber evidence="1">3.5.1.-</ecNumber>
        <ecNumber evidence="1">3.5.1.124</ecNumber>
    </recommendedName>
    <alternativeName>
        <fullName evidence="1">Maillard deglycase</fullName>
    </alternativeName>
</protein>
<dbReference type="EC" id="3.1.2.-" evidence="1"/>
<dbReference type="EC" id="3.5.1.-" evidence="1"/>
<dbReference type="EC" id="3.5.1.124" evidence="1"/>
<dbReference type="EMBL" id="BA000033">
    <property type="protein sequence ID" value="BAB94371.1"/>
    <property type="molecule type" value="Genomic_DNA"/>
</dbReference>
<dbReference type="RefSeq" id="WP_000076405.1">
    <property type="nucleotide sequence ID" value="NC_003923.1"/>
</dbReference>
<dbReference type="SMR" id="Q8NXY2"/>
<dbReference type="MEROPS" id="C56.006"/>
<dbReference type="KEGG" id="sam:MW0506"/>
<dbReference type="HOGENOM" id="CLU_066933_0_0_9"/>
<dbReference type="GO" id="GO:0005737">
    <property type="term" value="C:cytoplasm"/>
    <property type="evidence" value="ECO:0007669"/>
    <property type="project" value="UniProtKB-SubCell"/>
</dbReference>
<dbReference type="GO" id="GO:0019172">
    <property type="term" value="F:glyoxalase III activity"/>
    <property type="evidence" value="ECO:0007669"/>
    <property type="project" value="TreeGrafter"/>
</dbReference>
<dbReference type="GO" id="GO:0036524">
    <property type="term" value="F:protein deglycase activity"/>
    <property type="evidence" value="ECO:0007669"/>
    <property type="project" value="UniProtKB-UniRule"/>
</dbReference>
<dbReference type="GO" id="GO:0016790">
    <property type="term" value="F:thiolester hydrolase activity"/>
    <property type="evidence" value="ECO:0007669"/>
    <property type="project" value="UniProtKB-UniRule"/>
</dbReference>
<dbReference type="GO" id="GO:0006281">
    <property type="term" value="P:DNA repair"/>
    <property type="evidence" value="ECO:0007669"/>
    <property type="project" value="UniProtKB-UniRule"/>
</dbReference>
<dbReference type="GO" id="GO:0019243">
    <property type="term" value="P:methylglyoxal catabolic process to D-lactate via S-lactoyl-glutathione"/>
    <property type="evidence" value="ECO:0007669"/>
    <property type="project" value="TreeGrafter"/>
</dbReference>
<dbReference type="GO" id="GO:0030091">
    <property type="term" value="P:protein repair"/>
    <property type="evidence" value="ECO:0007669"/>
    <property type="project" value="UniProtKB-UniRule"/>
</dbReference>
<dbReference type="CDD" id="cd03148">
    <property type="entry name" value="GATase1_EcHsp31_like"/>
    <property type="match status" value="1"/>
</dbReference>
<dbReference type="Gene3D" id="3.40.50.880">
    <property type="match status" value="1"/>
</dbReference>
<dbReference type="HAMAP" id="MF_01046">
    <property type="entry name" value="Deglycase_HchA"/>
    <property type="match status" value="1"/>
</dbReference>
<dbReference type="InterPro" id="IPR029062">
    <property type="entry name" value="Class_I_gatase-like"/>
</dbReference>
<dbReference type="InterPro" id="IPR002818">
    <property type="entry name" value="DJ-1/PfpI"/>
</dbReference>
<dbReference type="InterPro" id="IPR017283">
    <property type="entry name" value="HchA"/>
</dbReference>
<dbReference type="InterPro" id="IPR050325">
    <property type="entry name" value="Prot/Nucl_acid_deglycase"/>
</dbReference>
<dbReference type="NCBIfam" id="NF003168">
    <property type="entry name" value="PRK04155.1"/>
    <property type="match status" value="1"/>
</dbReference>
<dbReference type="PANTHER" id="PTHR48094">
    <property type="entry name" value="PROTEIN/NUCLEIC ACID DEGLYCASE DJ-1-RELATED"/>
    <property type="match status" value="1"/>
</dbReference>
<dbReference type="PANTHER" id="PTHR48094:SF20">
    <property type="entry name" value="PROTEIN_NUCLEIC ACID DEGLYCASE 1"/>
    <property type="match status" value="1"/>
</dbReference>
<dbReference type="Pfam" id="PF01965">
    <property type="entry name" value="DJ-1_PfpI"/>
    <property type="match status" value="1"/>
</dbReference>
<dbReference type="PIRSF" id="PIRSF037798">
    <property type="entry name" value="Chaperone_HchA"/>
    <property type="match status" value="1"/>
</dbReference>
<dbReference type="SUPFAM" id="SSF52317">
    <property type="entry name" value="Class I glutamine amidotransferase-like"/>
    <property type="match status" value="1"/>
</dbReference>
<keyword id="KW-0963">Cytoplasm</keyword>
<keyword id="KW-0227">DNA damage</keyword>
<keyword id="KW-0234">DNA repair</keyword>
<keyword id="KW-0378">Hydrolase</keyword>
<keyword id="KW-0346">Stress response</keyword>
<proteinExistence type="inferred from homology"/>
<accession>Q8NXY2</accession>
<evidence type="ECO:0000255" key="1">
    <source>
        <dbReference type="HAMAP-Rule" id="MF_01046"/>
    </source>
</evidence>
<evidence type="ECO:0000256" key="2">
    <source>
        <dbReference type="SAM" id="MobiDB-lite"/>
    </source>
</evidence>
<comment type="function">
    <text evidence="1">Protein and nucleotide deglycase that catalyzes the deglycation of the Maillard adducts formed between amino groups of proteins or nucleotides and reactive carbonyl groups of glyoxals. Thus, functions as a protein deglycase that repairs methylglyoxal- and glyoxal-glycated proteins, and releases repaired proteins and lactate or glycolate, respectively. Deglycates cysteine, arginine and lysine residues in proteins, and thus reactivates these proteins by reversing glycation by glyoxals. Acts on early glycation intermediates (hemithioacetals and aminocarbinols), preventing the formation of Schiff bases and advanced glycation endproducts (AGE). Also functions as a nucleotide deglycase able to repair glycated guanine in the free nucleotide pool (GTP, GDP, GMP, dGTP) and in DNA and RNA. Is thus involved in a major nucleotide repair system named guanine glycation repair (GG repair), dedicated to reversing methylglyoxal and glyoxal damage via nucleotide sanitization and direct nucleic acid repair. Plays an important role in protecting cells from carbonyl stress.</text>
</comment>
<comment type="catalytic activity">
    <reaction evidence="1">
        <text>N(omega)-(1-hydroxy-2-oxopropyl)-L-arginyl-[protein] + H2O = lactate + L-arginyl-[protein] + H(+)</text>
        <dbReference type="Rhea" id="RHEA:49548"/>
        <dbReference type="Rhea" id="RHEA-COMP:10532"/>
        <dbReference type="Rhea" id="RHEA-COMP:12428"/>
        <dbReference type="ChEBI" id="CHEBI:15377"/>
        <dbReference type="ChEBI" id="CHEBI:15378"/>
        <dbReference type="ChEBI" id="CHEBI:24996"/>
        <dbReference type="ChEBI" id="CHEBI:29965"/>
        <dbReference type="ChEBI" id="CHEBI:131708"/>
        <dbReference type="EC" id="3.5.1.124"/>
    </reaction>
</comment>
<comment type="catalytic activity">
    <reaction evidence="1">
        <text>N(6)-(1-hydroxy-2-oxopropyl)-L-lysyl-[protein] + H2O = lactate + L-lysyl-[protein] + H(+)</text>
        <dbReference type="Rhea" id="RHEA:49552"/>
        <dbReference type="Rhea" id="RHEA-COMP:9752"/>
        <dbReference type="Rhea" id="RHEA-COMP:12429"/>
        <dbReference type="ChEBI" id="CHEBI:15377"/>
        <dbReference type="ChEBI" id="CHEBI:15378"/>
        <dbReference type="ChEBI" id="CHEBI:24996"/>
        <dbReference type="ChEBI" id="CHEBI:29969"/>
        <dbReference type="ChEBI" id="CHEBI:131709"/>
        <dbReference type="EC" id="3.5.1.124"/>
    </reaction>
</comment>
<comment type="catalytic activity">
    <reaction evidence="1">
        <text>S-(1-hydroxy-2-oxopropyl)-L-cysteinyl-[protein] + H2O = lactate + L-cysteinyl-[protein] + H(+)</text>
        <dbReference type="Rhea" id="RHEA:49556"/>
        <dbReference type="Rhea" id="RHEA-COMP:10131"/>
        <dbReference type="Rhea" id="RHEA-COMP:12430"/>
        <dbReference type="ChEBI" id="CHEBI:15377"/>
        <dbReference type="ChEBI" id="CHEBI:15378"/>
        <dbReference type="ChEBI" id="CHEBI:24996"/>
        <dbReference type="ChEBI" id="CHEBI:29950"/>
        <dbReference type="ChEBI" id="CHEBI:131710"/>
        <dbReference type="EC" id="3.5.1.124"/>
    </reaction>
</comment>
<comment type="catalytic activity">
    <reaction evidence="1">
        <text>N(omega)-(1-hydroxy-2-oxoethyl)-L-arginyl-[protein] + H2O = L-arginyl-[protein] + glycolate + H(+)</text>
        <dbReference type="Rhea" id="RHEA:57188"/>
        <dbReference type="Rhea" id="RHEA-COMP:10532"/>
        <dbReference type="Rhea" id="RHEA-COMP:14844"/>
        <dbReference type="ChEBI" id="CHEBI:15377"/>
        <dbReference type="ChEBI" id="CHEBI:15378"/>
        <dbReference type="ChEBI" id="CHEBI:29805"/>
        <dbReference type="ChEBI" id="CHEBI:29965"/>
        <dbReference type="ChEBI" id="CHEBI:141553"/>
        <dbReference type="EC" id="3.5.1.124"/>
    </reaction>
</comment>
<comment type="catalytic activity">
    <reaction evidence="1">
        <text>N(6)-(1-hydroxy-2-oxoethyl)-L-lysyl-[protein] + H2O = glycolate + L-lysyl-[protein] + H(+)</text>
        <dbReference type="Rhea" id="RHEA:57192"/>
        <dbReference type="Rhea" id="RHEA-COMP:9752"/>
        <dbReference type="Rhea" id="RHEA-COMP:14845"/>
        <dbReference type="ChEBI" id="CHEBI:15377"/>
        <dbReference type="ChEBI" id="CHEBI:15378"/>
        <dbReference type="ChEBI" id="CHEBI:29805"/>
        <dbReference type="ChEBI" id="CHEBI:29969"/>
        <dbReference type="ChEBI" id="CHEBI:141554"/>
        <dbReference type="EC" id="3.5.1.124"/>
    </reaction>
</comment>
<comment type="catalytic activity">
    <reaction evidence="1">
        <text>S-(1-hydroxy-2-oxoethyl)-L-cysteinyl-[protein] + H2O = glycolate + L-cysteinyl-[protein] + H(+)</text>
        <dbReference type="Rhea" id="RHEA:57196"/>
        <dbReference type="Rhea" id="RHEA-COMP:10131"/>
        <dbReference type="Rhea" id="RHEA-COMP:14846"/>
        <dbReference type="ChEBI" id="CHEBI:15377"/>
        <dbReference type="ChEBI" id="CHEBI:15378"/>
        <dbReference type="ChEBI" id="CHEBI:29805"/>
        <dbReference type="ChEBI" id="CHEBI:29950"/>
        <dbReference type="ChEBI" id="CHEBI:141555"/>
        <dbReference type="EC" id="3.5.1.124"/>
    </reaction>
</comment>
<comment type="catalytic activity">
    <reaction evidence="1">
        <text>N(2)-(1-hydroxy-2-oxopropyl)-dGTP + H2O = lactate + dGTP + H(+)</text>
        <dbReference type="Rhea" id="RHEA:57244"/>
        <dbReference type="ChEBI" id="CHEBI:15377"/>
        <dbReference type="ChEBI" id="CHEBI:15378"/>
        <dbReference type="ChEBI" id="CHEBI:24996"/>
        <dbReference type="ChEBI" id="CHEBI:61429"/>
        <dbReference type="ChEBI" id="CHEBI:141569"/>
    </reaction>
</comment>
<comment type="catalytic activity">
    <reaction evidence="1">
        <text>N(2)-(1-hydroxy-2-oxopropyl)-GTP + H2O = lactate + GTP + H(+)</text>
        <dbReference type="Rhea" id="RHEA:57256"/>
        <dbReference type="ChEBI" id="CHEBI:15377"/>
        <dbReference type="ChEBI" id="CHEBI:15378"/>
        <dbReference type="ChEBI" id="CHEBI:24996"/>
        <dbReference type="ChEBI" id="CHEBI:37565"/>
        <dbReference type="ChEBI" id="CHEBI:141570"/>
    </reaction>
</comment>
<comment type="catalytic activity">
    <reaction evidence="1">
        <text>N(2)-(1-hydroxy-2-oxopropyl)-GDP + H2O = lactate + GDP + H(+)</text>
        <dbReference type="Rhea" id="RHEA:57260"/>
        <dbReference type="ChEBI" id="CHEBI:15377"/>
        <dbReference type="ChEBI" id="CHEBI:15378"/>
        <dbReference type="ChEBI" id="CHEBI:24996"/>
        <dbReference type="ChEBI" id="CHEBI:58189"/>
        <dbReference type="ChEBI" id="CHEBI:141573"/>
    </reaction>
</comment>
<comment type="catalytic activity">
    <reaction evidence="1">
        <text>N(2)-(1-hydroxy-2-oxopropyl)-GMP + H2O = lactate + GMP + H(+)</text>
        <dbReference type="Rhea" id="RHEA:57268"/>
        <dbReference type="ChEBI" id="CHEBI:15377"/>
        <dbReference type="ChEBI" id="CHEBI:15378"/>
        <dbReference type="ChEBI" id="CHEBI:24996"/>
        <dbReference type="ChEBI" id="CHEBI:58115"/>
        <dbReference type="ChEBI" id="CHEBI:141575"/>
    </reaction>
</comment>
<comment type="catalytic activity">
    <reaction evidence="1">
        <text>N(2)-(1-hydroxy-2-oxoethyl)-dGTP + H2O = dGTP + glycolate + H(+)</text>
        <dbReference type="Rhea" id="RHEA:57248"/>
        <dbReference type="ChEBI" id="CHEBI:15377"/>
        <dbReference type="ChEBI" id="CHEBI:15378"/>
        <dbReference type="ChEBI" id="CHEBI:29805"/>
        <dbReference type="ChEBI" id="CHEBI:61429"/>
        <dbReference type="ChEBI" id="CHEBI:141572"/>
    </reaction>
</comment>
<comment type="catalytic activity">
    <reaction evidence="1">
        <text>N(2)-(1-hydroxy-2-oxoethyl)-GTP + H2O = glycolate + GTP + H(+)</text>
        <dbReference type="Rhea" id="RHEA:57252"/>
        <dbReference type="ChEBI" id="CHEBI:15377"/>
        <dbReference type="ChEBI" id="CHEBI:15378"/>
        <dbReference type="ChEBI" id="CHEBI:29805"/>
        <dbReference type="ChEBI" id="CHEBI:37565"/>
        <dbReference type="ChEBI" id="CHEBI:141571"/>
    </reaction>
</comment>
<comment type="catalytic activity">
    <reaction evidence="1">
        <text>N(2)-(1-hydroxy-2-oxoethyl)-GDP + H2O = glycolate + GDP + H(+)</text>
        <dbReference type="Rhea" id="RHEA:57264"/>
        <dbReference type="ChEBI" id="CHEBI:15377"/>
        <dbReference type="ChEBI" id="CHEBI:15378"/>
        <dbReference type="ChEBI" id="CHEBI:29805"/>
        <dbReference type="ChEBI" id="CHEBI:58189"/>
        <dbReference type="ChEBI" id="CHEBI:141574"/>
    </reaction>
</comment>
<comment type="catalytic activity">
    <reaction evidence="1">
        <text>N(2)-(1-hydroxy-2-oxoethyl)-GMP + H2O = glycolate + GMP + H(+)</text>
        <dbReference type="Rhea" id="RHEA:57304"/>
        <dbReference type="ChEBI" id="CHEBI:15377"/>
        <dbReference type="ChEBI" id="CHEBI:15378"/>
        <dbReference type="ChEBI" id="CHEBI:29805"/>
        <dbReference type="ChEBI" id="CHEBI:58115"/>
        <dbReference type="ChEBI" id="CHEBI:141576"/>
    </reaction>
</comment>
<comment type="catalytic activity">
    <reaction evidence="1">
        <text>an N(2)-(1-hydroxy-2-oxopropyl)-guanosine in RNA + H2O = a guanosine in RNA + lactate + H(+)</text>
        <dbReference type="Rhea" id="RHEA:57288"/>
        <dbReference type="Rhea" id="RHEA-COMP:14855"/>
        <dbReference type="Rhea" id="RHEA-COMP:14858"/>
        <dbReference type="ChEBI" id="CHEBI:15377"/>
        <dbReference type="ChEBI" id="CHEBI:15378"/>
        <dbReference type="ChEBI" id="CHEBI:24996"/>
        <dbReference type="ChEBI" id="CHEBI:74269"/>
        <dbReference type="ChEBI" id="CHEBI:141580"/>
    </reaction>
</comment>
<comment type="catalytic activity">
    <reaction evidence="1">
        <text>an N(2)-(1-hydroxy-2-oxopropyl)-2'-deoxyguanosine in DNA + H2O = a 2'-deoxyguanosine in DNA + lactate + H(+)</text>
        <dbReference type="Rhea" id="RHEA:57300"/>
        <dbReference type="Rhea" id="RHEA-COMP:11367"/>
        <dbReference type="Rhea" id="RHEA-COMP:14856"/>
        <dbReference type="ChEBI" id="CHEBI:15377"/>
        <dbReference type="ChEBI" id="CHEBI:15378"/>
        <dbReference type="ChEBI" id="CHEBI:24996"/>
        <dbReference type="ChEBI" id="CHEBI:85445"/>
        <dbReference type="ChEBI" id="CHEBI:141578"/>
    </reaction>
</comment>
<comment type="catalytic activity">
    <reaction evidence="1">
        <text>an N(2)-(1-hydroxy-2-oxoethyl)-guanosine in RNA + H2O = a guanosine in RNA + glycolate + H(+)</text>
        <dbReference type="Rhea" id="RHEA:57292"/>
        <dbReference type="Rhea" id="RHEA-COMP:14855"/>
        <dbReference type="Rhea" id="RHEA-COMP:14859"/>
        <dbReference type="ChEBI" id="CHEBI:15377"/>
        <dbReference type="ChEBI" id="CHEBI:15378"/>
        <dbReference type="ChEBI" id="CHEBI:29805"/>
        <dbReference type="ChEBI" id="CHEBI:74269"/>
        <dbReference type="ChEBI" id="CHEBI:141581"/>
    </reaction>
</comment>
<comment type="catalytic activity">
    <reaction evidence="1">
        <text>an N(2)-(1-hydroxy-2-oxoethyl)-2'-deoxyguanosine in DNA + H2O = a 2'-deoxyguanosine in DNA + glycolate + H(+)</text>
        <dbReference type="Rhea" id="RHEA:57296"/>
        <dbReference type="Rhea" id="RHEA-COMP:11367"/>
        <dbReference type="Rhea" id="RHEA-COMP:14857"/>
        <dbReference type="ChEBI" id="CHEBI:15377"/>
        <dbReference type="ChEBI" id="CHEBI:15378"/>
        <dbReference type="ChEBI" id="CHEBI:29805"/>
        <dbReference type="ChEBI" id="CHEBI:85445"/>
        <dbReference type="ChEBI" id="CHEBI:141579"/>
    </reaction>
</comment>
<comment type="subcellular location">
    <subcellularLocation>
        <location evidence="1">Cytoplasm</location>
    </subcellularLocation>
</comment>
<comment type="similarity">
    <text evidence="1">Belongs to the peptidase C56 family. HchA subfamily.</text>
</comment>
<sequence>MSQDVNELSKQPTPDKAEDNAFFPSPYSLSQYTAPKTDFDGVEHKGAYKDGKWKVLMIAAEERYVLLENGKMFSTGNHPVEMLLPLHHLMEAGFDVDVATLSGYPVKLELWAMPTEDEAVISTYNKLKEKLKQPKKLADVIKNELGPDSDYLSVFIPGGHAAVVGISESEDVQQTLDWALDNDRFIVTLCHGPAALLSAGLNREKSTLEGYSVCVFPDSLDEGANIEIGYLPGRLKWLVADLLTKQGLKVVNDDMTGRTLKDRKLLTGDSPLASNELGKLAVNEMLNAIQNK</sequence>
<name>HCHA_STAAW</name>
<reference key="1">
    <citation type="journal article" date="2002" name="Lancet">
        <title>Genome and virulence determinants of high virulence community-acquired MRSA.</title>
        <authorList>
            <person name="Baba T."/>
            <person name="Takeuchi F."/>
            <person name="Kuroda M."/>
            <person name="Yuzawa H."/>
            <person name="Aoki K."/>
            <person name="Oguchi A."/>
            <person name="Nagai Y."/>
            <person name="Iwama N."/>
            <person name="Asano K."/>
            <person name="Naimi T."/>
            <person name="Kuroda H."/>
            <person name="Cui L."/>
            <person name="Yamamoto K."/>
            <person name="Hiramatsu K."/>
        </authorList>
    </citation>
    <scope>NUCLEOTIDE SEQUENCE [LARGE SCALE GENOMIC DNA]</scope>
    <source>
        <strain>MW2</strain>
    </source>
</reference>
<gene>
    <name evidence="1" type="primary">hchA</name>
    <name type="ordered locus">MW0506</name>
</gene>
<organism>
    <name type="scientific">Staphylococcus aureus (strain MW2)</name>
    <dbReference type="NCBI Taxonomy" id="196620"/>
    <lineage>
        <taxon>Bacteria</taxon>
        <taxon>Bacillati</taxon>
        <taxon>Bacillota</taxon>
        <taxon>Bacilli</taxon>
        <taxon>Bacillales</taxon>
        <taxon>Staphylococcaceae</taxon>
        <taxon>Staphylococcus</taxon>
    </lineage>
</organism>
<feature type="chain" id="PRO_0000209421" description="Protein/nucleic acid deglycase HchA">
    <location>
        <begin position="1"/>
        <end position="292"/>
    </location>
</feature>
<feature type="region of interest" description="Disordered" evidence="2">
    <location>
        <begin position="1"/>
        <end position="23"/>
    </location>
</feature>
<feature type="compositionally biased region" description="Polar residues" evidence="2">
    <location>
        <begin position="1"/>
        <end position="12"/>
    </location>
</feature>
<feature type="active site" description="Nucleophile" evidence="1">
    <location>
        <position position="190"/>
    </location>
</feature>